<keyword id="KW-0002">3D-structure</keyword>
<keyword id="KW-0031">Aminopeptidase</keyword>
<keyword id="KW-0130">Cell adhesion</keyword>
<keyword id="KW-0965">Cell junction</keyword>
<keyword id="KW-1003">Cell membrane</keyword>
<keyword id="KW-0966">Cell projection</keyword>
<keyword id="KW-0903">Direct protein sequencing</keyword>
<keyword id="KW-1015">Disulfide bond</keyword>
<keyword id="KW-0325">Glycoprotein</keyword>
<keyword id="KW-0378">Hydrolase</keyword>
<keyword id="KW-0472">Membrane</keyword>
<keyword id="KW-0645">Protease</keyword>
<keyword id="KW-1185">Reference proteome</keyword>
<keyword id="KW-0964">Secreted</keyword>
<keyword id="KW-0720">Serine protease</keyword>
<keyword id="KW-0735">Signal-anchor</keyword>
<keyword id="KW-0812">Transmembrane</keyword>
<keyword id="KW-1133">Transmembrane helix</keyword>
<protein>
    <recommendedName>
        <fullName>Dipeptidyl peptidase 4</fullName>
        <ecNumber evidence="2">3.4.14.5</ecNumber>
    </recommendedName>
    <alternativeName>
        <fullName>Dipeptidyl peptidase IV</fullName>
        <shortName>DPP IV</shortName>
    </alternativeName>
    <alternativeName>
        <fullName>T-cell activation antigen CD26</fullName>
    </alternativeName>
    <cdAntigenName>CD26</cdAntigenName>
    <component>
        <recommendedName>
            <fullName>Dipeptidyl peptidase 4 membrane form</fullName>
        </recommendedName>
        <alternativeName>
            <fullName>Dipeptidyl peptidase IV membrane form</fullName>
        </alternativeName>
    </component>
    <component>
        <recommendedName>
            <fullName>Dipeptidyl peptidase 4 soluble form</fullName>
        </recommendedName>
        <alternativeName>
            <fullName>Dipeptidyl peptidase IV soluble form</fullName>
        </alternativeName>
    </component>
</protein>
<evidence type="ECO:0000250" key="1"/>
<evidence type="ECO:0000250" key="2">
    <source>
        <dbReference type="UniProtKB" id="P27487"/>
    </source>
</evidence>
<evidence type="ECO:0000255" key="3"/>
<evidence type="ECO:0000255" key="4">
    <source>
        <dbReference type="PROSITE-ProRule" id="PRU00498"/>
    </source>
</evidence>
<evidence type="ECO:0000255" key="5">
    <source>
        <dbReference type="PROSITE-ProRule" id="PRU10084"/>
    </source>
</evidence>
<evidence type="ECO:0000269" key="6">
    <source>
    </source>
</evidence>
<evidence type="ECO:0000269" key="7">
    <source>
    </source>
</evidence>
<evidence type="ECO:0000305" key="8"/>
<evidence type="ECO:0007829" key="9">
    <source>
        <dbReference type="PDB" id="1ORV"/>
    </source>
</evidence>
<evidence type="ECO:0007829" key="10">
    <source>
        <dbReference type="PDB" id="2AJ8"/>
    </source>
</evidence>
<evidence type="ECO:0007829" key="11">
    <source>
        <dbReference type="PDB" id="2AJC"/>
    </source>
</evidence>
<evidence type="ECO:0007829" key="12">
    <source>
        <dbReference type="PDB" id="2BUC"/>
    </source>
</evidence>
<reference key="1">
    <citation type="journal article" date="2003" name="Biol. Chem.">
        <title>Characterisation of human dipeptidyl peptidase IV expressed in Pichia pastoris. A structural and mechanistic comparison between the recombinant human and the purified porcine enzyme.</title>
        <authorList>
            <person name="Baer J."/>
            <person name="Weber A."/>
            <person name="Hoffmann T."/>
            <person name="Stork J."/>
            <person name="Wermann M."/>
            <person name="Wagner L."/>
            <person name="Aust S."/>
            <person name="Gerhartz B."/>
            <person name="Demuth H.-U."/>
        </authorList>
    </citation>
    <scope>NUCLEOTIDE SEQUENCE [MRNA]</scope>
    <scope>FUNCTION</scope>
    <source>
        <tissue>Kidney</tissue>
    </source>
</reference>
<reference key="2">
    <citation type="journal article" date="1993" name="Mamm. Genome">
        <title>Assignment of the dipeptidylpeptidase IV (DPP4) gene to pig chromosome 15q21.</title>
        <authorList>
            <person name="Thomsen P.D."/>
            <person name="Qvist H."/>
            <person name="Marklund L."/>
            <person name="Andersson L."/>
            <person name="Sjostrom H."/>
            <person name="Noren O."/>
        </authorList>
    </citation>
    <scope>NUCLEOTIDE SEQUENCE [MRNA] OF 2-67</scope>
    <source>
        <tissue>Kidney</tissue>
    </source>
</reference>
<reference key="3">
    <citation type="journal article" date="1991" name="Biol. Chem. Hoppe-Seyler">
        <title>N-terminal amino-acid sequence of pig kidney dipeptidyl peptidase IV solubilized by autolysis.</title>
        <authorList>
            <person name="Seidl R."/>
            <person name="Mann K."/>
            <person name="Schaeffer W."/>
        </authorList>
    </citation>
    <scope>PROTEIN SEQUENCE OF 38-71</scope>
    <source>
        <tissue>Kidney</tissue>
    </source>
</reference>
<reference key="4">
    <citation type="journal article" date="2003" name="Proc. Natl. Acad. Sci. U.S.A.">
        <title>The crystal structure of dipeptidyl peptidase IV (CD26) reveals its functional regulation and enzymatic mechanism.</title>
        <authorList>
            <person name="Engel M."/>
            <person name="Hoffmann T."/>
            <person name="Wagner L."/>
            <person name="Wermann M."/>
            <person name="Heiser U."/>
            <person name="Kiefersauer R."/>
            <person name="Huber R."/>
            <person name="Bode W."/>
            <person name="Demuth H.-U."/>
            <person name="Brandstetter H."/>
        </authorList>
    </citation>
    <scope>X-RAY CRYSTALLOGRAPHY (1.8 ANGSTROMS) OF 39-766</scope>
    <scope>GLYCOSYLATION AT ASN-85; ASN-92; ASN-229; ASN-279; ASN-321 AND ASN-685</scope>
    <scope>HOMODIMERIZATION</scope>
</reference>
<gene>
    <name type="primary">DPP4</name>
    <name type="synonym">CD26</name>
</gene>
<organism>
    <name type="scientific">Sus scrofa</name>
    <name type="common">Pig</name>
    <dbReference type="NCBI Taxonomy" id="9823"/>
    <lineage>
        <taxon>Eukaryota</taxon>
        <taxon>Metazoa</taxon>
        <taxon>Chordata</taxon>
        <taxon>Craniata</taxon>
        <taxon>Vertebrata</taxon>
        <taxon>Euteleostomi</taxon>
        <taxon>Mammalia</taxon>
        <taxon>Eutheria</taxon>
        <taxon>Laurasiatheria</taxon>
        <taxon>Artiodactyla</taxon>
        <taxon>Suina</taxon>
        <taxon>Suidae</taxon>
        <taxon>Sus</taxon>
    </lineage>
</organism>
<proteinExistence type="evidence at protein level"/>
<accession>P22411</accession>
<accession>Q866G2</accession>
<sequence length="766" mass="88242">MKTPWKVLLGLLGIAALVTVITVPVVLLNKGTDDAAADSRRTYTLTDYLKSTFRVKFYTLQWISDHEYLYKQENNILLFNAEYGNSSIFLENSTFDELGYSTNDYSVSPDRQFILFEYNYVKQWRHSYTASYDIYDLNKRQLITEERIPNNTQWITWSPVGHKLAYVWNNDIYVKNEPNLSSQRITWTGKENVIYNGVTDWVYEEEVFSAYSALWWSPNGTFLAYAQFNDTEVPLIEYSFYSDESLQYPKTVRIPYPKAGAENPTVKFFVVDTRTLSPNASVTSYQIVPPASVLIGDHYLCGVTWVTEERISLQWIRRAQNYSIIDICDYDESTGRWISSVARQHIEISTTGWVGRFRPAEPHFTSDGNSFYKIISNEEGYKHICHFQTDKSNCTFITKGAWEVIGIEALTSDYLYYISNEHKGMPGGRNLYRIQLNDYTKVTCLSCELNPERCQYYSASFSNKAKYYQLRCFGPGLPLYTLHSSSSDKELRVLEDNSALDKMLQDVQMPSKKLDVINLHGTKFWYQMILPPHFDKSKKYPLLIEVYAGPCSQKVDTVFRLSWATYLASTENIIVASFDGRGSGYQGDKIMHAINRRLGTFEVEDQIEATRQFSKMGFVDDKRIAIWGWSYGGYVTSMVLGAGSGVFKCGIAVAPVSKWEYYDSVYTERYMGLPTPEDNLDYYRNSTVMSRAENFKQVEYLLIHGTADDNVHFQQSAQLSKALVDAGVDFQTMWYTDEDHGIASNMAHQHIYTHMSHFLKQCFSLP</sequence>
<dbReference type="EC" id="3.4.14.5" evidence="2"/>
<dbReference type="EMBL" id="AY198323">
    <property type="protein sequence ID" value="AAO43404.1"/>
    <property type="molecule type" value="mRNA"/>
</dbReference>
<dbReference type="EMBL" id="X73276">
    <property type="protein sequence ID" value="CAA51717.1"/>
    <property type="molecule type" value="mRNA"/>
</dbReference>
<dbReference type="PIR" id="I47134">
    <property type="entry name" value="I47134"/>
</dbReference>
<dbReference type="PIR" id="S14746">
    <property type="entry name" value="S14746"/>
</dbReference>
<dbReference type="RefSeq" id="NP_999422.1">
    <property type="nucleotide sequence ID" value="NM_214257.1"/>
</dbReference>
<dbReference type="PDB" id="1ORV">
    <property type="method" value="X-ray"/>
    <property type="resolution" value="1.80 A"/>
    <property type="chains" value="A/B/C/D=39-766"/>
</dbReference>
<dbReference type="PDB" id="1ORW">
    <property type="method" value="X-ray"/>
    <property type="resolution" value="2.84 A"/>
    <property type="chains" value="A/B/C/D=39-766"/>
</dbReference>
<dbReference type="PDB" id="2AJ8">
    <property type="method" value="X-ray"/>
    <property type="resolution" value="2.11 A"/>
    <property type="chains" value="A/B/C/D=39-766"/>
</dbReference>
<dbReference type="PDB" id="2AJB">
    <property type="method" value="X-ray"/>
    <property type="resolution" value="2.75 A"/>
    <property type="chains" value="A/B/C/D=39-766"/>
</dbReference>
<dbReference type="PDB" id="2AJC">
    <property type="method" value="X-ray"/>
    <property type="resolution" value="1.95 A"/>
    <property type="chains" value="A/B/C/D=39-766"/>
</dbReference>
<dbReference type="PDB" id="2AJD">
    <property type="method" value="X-ray"/>
    <property type="resolution" value="2.56 A"/>
    <property type="chains" value="A/B/C/D=39-766"/>
</dbReference>
<dbReference type="PDB" id="2BUA">
    <property type="method" value="X-ray"/>
    <property type="resolution" value="2.56 A"/>
    <property type="chains" value="A/B/C/D=39-766"/>
</dbReference>
<dbReference type="PDB" id="2BUC">
    <property type="method" value="X-ray"/>
    <property type="resolution" value="2.50 A"/>
    <property type="chains" value="A/B/C/D=39-766"/>
</dbReference>
<dbReference type="PDB" id="5LLS">
    <property type="method" value="X-ray"/>
    <property type="resolution" value="2.41 A"/>
    <property type="chains" value="A/B/C/D=1-766"/>
</dbReference>
<dbReference type="PDB" id="7XNM">
    <property type="method" value="X-ray"/>
    <property type="resolution" value="3.58 A"/>
    <property type="chains" value="A/B=39-766"/>
</dbReference>
<dbReference type="PDBsum" id="1ORV"/>
<dbReference type="PDBsum" id="1ORW"/>
<dbReference type="PDBsum" id="2AJ8"/>
<dbReference type="PDBsum" id="2AJB"/>
<dbReference type="PDBsum" id="2AJC"/>
<dbReference type="PDBsum" id="2AJD"/>
<dbReference type="PDBsum" id="2BUA"/>
<dbReference type="PDBsum" id="2BUC"/>
<dbReference type="PDBsum" id="5LLS"/>
<dbReference type="PDBsum" id="7XNM"/>
<dbReference type="SMR" id="P22411"/>
<dbReference type="FunCoup" id="P22411">
    <property type="interactions" value="160"/>
</dbReference>
<dbReference type="STRING" id="9823.ENSSSCP00000059750"/>
<dbReference type="BindingDB" id="P22411"/>
<dbReference type="ChEMBL" id="CHEMBL3813"/>
<dbReference type="ESTHER" id="pig-dpp4">
    <property type="family name" value="DPP4N_Peptidase_S9"/>
</dbReference>
<dbReference type="MEROPS" id="S09.003"/>
<dbReference type="GlyCosmos" id="P22411">
    <property type="glycosylation" value="9 sites, No reported glycans"/>
</dbReference>
<dbReference type="GlyGen" id="P22411">
    <property type="glycosylation" value="9 sites"/>
</dbReference>
<dbReference type="iPTMnet" id="P22411"/>
<dbReference type="PaxDb" id="9823-ENSSSCP00000028692"/>
<dbReference type="PeptideAtlas" id="P22411"/>
<dbReference type="Ensembl" id="ENSSSCT00000017306.5">
    <property type="protein sequence ID" value="ENSSSCP00000016843.4"/>
    <property type="gene ID" value="ENSSSCG00000015894.6"/>
</dbReference>
<dbReference type="Ensembl" id="ENSSSCT00070051059.1">
    <property type="protein sequence ID" value="ENSSSCP00070043179.1"/>
    <property type="gene ID" value="ENSSSCG00070025527.1"/>
</dbReference>
<dbReference type="Ensembl" id="ENSSSCT00090027103">
    <property type="protein sequence ID" value="ENSSSCP00090016699"/>
    <property type="gene ID" value="ENSSSCG00090015429"/>
</dbReference>
<dbReference type="Ensembl" id="ENSSSCT00115002702">
    <property type="protein sequence ID" value="ENSSSCP00115002521"/>
    <property type="gene ID" value="ENSSSCG00115001582"/>
</dbReference>
<dbReference type="Ensembl" id="ENSSSCT00130059146">
    <property type="protein sequence ID" value="ENSSSCP00130042483"/>
    <property type="gene ID" value="ENSSSCG00130030039"/>
</dbReference>
<dbReference type="GeneID" id="397492"/>
<dbReference type="KEGG" id="ssc:397492"/>
<dbReference type="CTD" id="1803"/>
<dbReference type="VGNC" id="VGNC:96236">
    <property type="gene designation" value="DPP4"/>
</dbReference>
<dbReference type="eggNOG" id="KOG2100">
    <property type="taxonomic scope" value="Eukaryota"/>
</dbReference>
<dbReference type="GeneTree" id="ENSGT00940000161291"/>
<dbReference type="HOGENOM" id="CLU_006105_4_3_1"/>
<dbReference type="InParanoid" id="P22411"/>
<dbReference type="OMA" id="NYDMHIF"/>
<dbReference type="OrthoDB" id="16520at2759"/>
<dbReference type="TreeFam" id="TF313309"/>
<dbReference type="BRENDA" id="3.4.14.5">
    <property type="organism ID" value="6170"/>
</dbReference>
<dbReference type="Reactome" id="R-SSC-381771">
    <property type="pathway name" value="Synthesis, secretion, and inactivation of Glucagon-like Peptide-1 (GLP-1)"/>
</dbReference>
<dbReference type="Reactome" id="R-SSC-400511">
    <property type="pathway name" value="Synthesis, secretion, and inactivation of Glucose-dependent Insulinotropic Polypeptide (GIP)"/>
</dbReference>
<dbReference type="EvolutionaryTrace" id="P22411"/>
<dbReference type="PRO" id="PR:P22411"/>
<dbReference type="Proteomes" id="UP000008227">
    <property type="component" value="Chromosome 15"/>
</dbReference>
<dbReference type="Proteomes" id="UP000314985">
    <property type="component" value="Chromosome 15"/>
</dbReference>
<dbReference type="Proteomes" id="UP000694570">
    <property type="component" value="Unplaced"/>
</dbReference>
<dbReference type="Proteomes" id="UP000694571">
    <property type="component" value="Unplaced"/>
</dbReference>
<dbReference type="Proteomes" id="UP000694720">
    <property type="component" value="Unplaced"/>
</dbReference>
<dbReference type="Proteomes" id="UP000694722">
    <property type="component" value="Unplaced"/>
</dbReference>
<dbReference type="Proteomes" id="UP000694723">
    <property type="component" value="Unplaced"/>
</dbReference>
<dbReference type="Proteomes" id="UP000694724">
    <property type="component" value="Unplaced"/>
</dbReference>
<dbReference type="Proteomes" id="UP000694725">
    <property type="component" value="Unplaced"/>
</dbReference>
<dbReference type="Proteomes" id="UP000694726">
    <property type="component" value="Unplaced"/>
</dbReference>
<dbReference type="Proteomes" id="UP000694727">
    <property type="component" value="Unplaced"/>
</dbReference>
<dbReference type="Proteomes" id="UP000694728">
    <property type="component" value="Unplaced"/>
</dbReference>
<dbReference type="GO" id="GO:0016324">
    <property type="term" value="C:apical plasma membrane"/>
    <property type="evidence" value="ECO:0007669"/>
    <property type="project" value="UniProtKB-SubCell"/>
</dbReference>
<dbReference type="GO" id="GO:0009986">
    <property type="term" value="C:cell surface"/>
    <property type="evidence" value="ECO:0000250"/>
    <property type="project" value="UniProtKB"/>
</dbReference>
<dbReference type="GO" id="GO:0030139">
    <property type="term" value="C:endocytic vesicle"/>
    <property type="evidence" value="ECO:0000250"/>
    <property type="project" value="UniProtKB"/>
</dbReference>
<dbReference type="GO" id="GO:0005576">
    <property type="term" value="C:extracellular region"/>
    <property type="evidence" value="ECO:0007669"/>
    <property type="project" value="UniProtKB-SubCell"/>
</dbReference>
<dbReference type="GO" id="GO:0046581">
    <property type="term" value="C:intercellular canaliculus"/>
    <property type="evidence" value="ECO:0007669"/>
    <property type="project" value="Ensembl"/>
</dbReference>
<dbReference type="GO" id="GO:0030027">
    <property type="term" value="C:lamellipodium"/>
    <property type="evidence" value="ECO:0000250"/>
    <property type="project" value="UniProtKB"/>
</dbReference>
<dbReference type="GO" id="GO:0031258">
    <property type="term" value="C:lamellipodium membrane"/>
    <property type="evidence" value="ECO:0007669"/>
    <property type="project" value="UniProtKB-SubCell"/>
</dbReference>
<dbReference type="GO" id="GO:0045121">
    <property type="term" value="C:membrane raft"/>
    <property type="evidence" value="ECO:0007669"/>
    <property type="project" value="UniProtKB-SubCell"/>
</dbReference>
<dbReference type="GO" id="GO:0004177">
    <property type="term" value="F:aminopeptidase activity"/>
    <property type="evidence" value="ECO:0007669"/>
    <property type="project" value="UniProtKB-KW"/>
</dbReference>
<dbReference type="GO" id="GO:0045499">
    <property type="term" value="F:chemorepellent activity"/>
    <property type="evidence" value="ECO:0007669"/>
    <property type="project" value="Ensembl"/>
</dbReference>
<dbReference type="GO" id="GO:0008239">
    <property type="term" value="F:dipeptidyl-peptidase activity"/>
    <property type="evidence" value="ECO:0000250"/>
    <property type="project" value="UniProtKB"/>
</dbReference>
<dbReference type="GO" id="GO:0002020">
    <property type="term" value="F:protease binding"/>
    <property type="evidence" value="ECO:0000250"/>
    <property type="project" value="UniProtKB"/>
</dbReference>
<dbReference type="GO" id="GO:0042803">
    <property type="term" value="F:protein homodimerization activity"/>
    <property type="evidence" value="ECO:0000250"/>
    <property type="project" value="UniProtKB"/>
</dbReference>
<dbReference type="GO" id="GO:0004252">
    <property type="term" value="F:serine-type endopeptidase activity"/>
    <property type="evidence" value="ECO:0007669"/>
    <property type="project" value="InterPro"/>
</dbReference>
<dbReference type="GO" id="GO:0005102">
    <property type="term" value="F:signaling receptor binding"/>
    <property type="evidence" value="ECO:0000250"/>
    <property type="project" value="UniProtKB"/>
</dbReference>
<dbReference type="GO" id="GO:0001618">
    <property type="term" value="F:virus receptor activity"/>
    <property type="evidence" value="ECO:0007669"/>
    <property type="project" value="Ensembl"/>
</dbReference>
<dbReference type="GO" id="GO:0001662">
    <property type="term" value="P:behavioral fear response"/>
    <property type="evidence" value="ECO:0007669"/>
    <property type="project" value="Ensembl"/>
</dbReference>
<dbReference type="GO" id="GO:0007155">
    <property type="term" value="P:cell adhesion"/>
    <property type="evidence" value="ECO:0007669"/>
    <property type="project" value="UniProtKB-KW"/>
</dbReference>
<dbReference type="GO" id="GO:0043542">
    <property type="term" value="P:endothelial cell migration"/>
    <property type="evidence" value="ECO:0000250"/>
    <property type="project" value="UniProtKB"/>
</dbReference>
<dbReference type="GO" id="GO:0035641">
    <property type="term" value="P:locomotory exploration behavior"/>
    <property type="evidence" value="ECO:0007669"/>
    <property type="project" value="Ensembl"/>
</dbReference>
<dbReference type="GO" id="GO:0010716">
    <property type="term" value="P:negative regulation of extracellular matrix disassembly"/>
    <property type="evidence" value="ECO:0000250"/>
    <property type="project" value="UniProtKB"/>
</dbReference>
<dbReference type="GO" id="GO:0090024">
    <property type="term" value="P:negative regulation of neutrophil chemotaxis"/>
    <property type="evidence" value="ECO:0007669"/>
    <property type="project" value="Ensembl"/>
</dbReference>
<dbReference type="GO" id="GO:0008284">
    <property type="term" value="P:positive regulation of cell population proliferation"/>
    <property type="evidence" value="ECO:0000250"/>
    <property type="project" value="UniProtKB"/>
</dbReference>
<dbReference type="GO" id="GO:0006508">
    <property type="term" value="P:proteolysis"/>
    <property type="evidence" value="ECO:0007669"/>
    <property type="project" value="UniProtKB-KW"/>
</dbReference>
<dbReference type="GO" id="GO:0036343">
    <property type="term" value="P:psychomotor behavior"/>
    <property type="evidence" value="ECO:0007669"/>
    <property type="project" value="Ensembl"/>
</dbReference>
<dbReference type="GO" id="GO:0033632">
    <property type="term" value="P:regulation of cell-cell adhesion mediated by integrin"/>
    <property type="evidence" value="ECO:0007669"/>
    <property type="project" value="Ensembl"/>
</dbReference>
<dbReference type="GO" id="GO:0001666">
    <property type="term" value="P:response to hypoxia"/>
    <property type="evidence" value="ECO:0007669"/>
    <property type="project" value="Ensembl"/>
</dbReference>
<dbReference type="GO" id="GO:0042110">
    <property type="term" value="P:T cell activation"/>
    <property type="evidence" value="ECO:0007669"/>
    <property type="project" value="Ensembl"/>
</dbReference>
<dbReference type="GO" id="GO:0031295">
    <property type="term" value="P:T cell costimulation"/>
    <property type="evidence" value="ECO:0000250"/>
    <property type="project" value="UniProtKB"/>
</dbReference>
<dbReference type="FunFam" id="2.140.10.30:FF:000001">
    <property type="entry name" value="Dipeptidyl peptidase 4"/>
    <property type="match status" value="1"/>
</dbReference>
<dbReference type="FunFam" id="3.40.50.1820:FF:000003">
    <property type="entry name" value="Dipeptidyl peptidase 4"/>
    <property type="match status" value="1"/>
</dbReference>
<dbReference type="Gene3D" id="3.40.50.1820">
    <property type="entry name" value="alpha/beta hydrolase"/>
    <property type="match status" value="1"/>
</dbReference>
<dbReference type="Gene3D" id="2.140.10.30">
    <property type="entry name" value="Dipeptidylpeptidase IV, N-terminal domain"/>
    <property type="match status" value="1"/>
</dbReference>
<dbReference type="InterPro" id="IPR029058">
    <property type="entry name" value="AB_hydrolase_fold"/>
</dbReference>
<dbReference type="InterPro" id="IPR040522">
    <property type="entry name" value="DPPIV_rep"/>
</dbReference>
<dbReference type="InterPro" id="IPR002471">
    <property type="entry name" value="Pept_S9_AS"/>
</dbReference>
<dbReference type="InterPro" id="IPR001375">
    <property type="entry name" value="Peptidase_S9_cat"/>
</dbReference>
<dbReference type="InterPro" id="IPR002469">
    <property type="entry name" value="Peptidase_S9B_N"/>
</dbReference>
<dbReference type="InterPro" id="IPR050278">
    <property type="entry name" value="Serine_Prot_S9B/DPPIV"/>
</dbReference>
<dbReference type="PANTHER" id="PTHR11731:SF128">
    <property type="entry name" value="DIPEPTIDYL PEPTIDASE 4"/>
    <property type="match status" value="1"/>
</dbReference>
<dbReference type="PANTHER" id="PTHR11731">
    <property type="entry name" value="PROTEASE FAMILY S9B,C DIPEPTIDYL-PEPTIDASE IV-RELATED"/>
    <property type="match status" value="1"/>
</dbReference>
<dbReference type="Pfam" id="PF00930">
    <property type="entry name" value="DPPIV_N"/>
    <property type="match status" value="1"/>
</dbReference>
<dbReference type="Pfam" id="PF18811">
    <property type="entry name" value="DPPIV_rep"/>
    <property type="match status" value="1"/>
</dbReference>
<dbReference type="Pfam" id="PF00326">
    <property type="entry name" value="Peptidase_S9"/>
    <property type="match status" value="1"/>
</dbReference>
<dbReference type="SUPFAM" id="SSF53474">
    <property type="entry name" value="alpha/beta-Hydrolases"/>
    <property type="match status" value="1"/>
</dbReference>
<dbReference type="SUPFAM" id="SSF82171">
    <property type="entry name" value="DPP6 N-terminal domain-like"/>
    <property type="match status" value="1"/>
</dbReference>
<dbReference type="PROSITE" id="PS00708">
    <property type="entry name" value="PRO_ENDOPEP_SER"/>
    <property type="match status" value="1"/>
</dbReference>
<feature type="chain" id="PRO_0000027217" description="Dipeptidyl peptidase 4 membrane form">
    <location>
        <begin position="1"/>
        <end position="766"/>
    </location>
</feature>
<feature type="chain" id="PRO_0000027218" description="Dipeptidyl peptidase 4 soluble form">
    <location>
        <begin position="38"/>
        <end position="766"/>
    </location>
</feature>
<feature type="topological domain" description="Cytoplasmic" evidence="3">
    <location>
        <begin position="1"/>
        <end position="6"/>
    </location>
</feature>
<feature type="transmembrane region" description="Helical; Signal-anchor for type II membrane protein" evidence="3">
    <location>
        <begin position="7"/>
        <end position="27"/>
    </location>
</feature>
<feature type="topological domain" description="Extracellular" evidence="3">
    <location>
        <begin position="28"/>
        <end position="766"/>
    </location>
</feature>
<feature type="active site" description="Charge relay system" evidence="5">
    <location>
        <position position="630"/>
    </location>
</feature>
<feature type="active site" description="Charge relay system" evidence="5">
    <location>
        <position position="708"/>
    </location>
</feature>
<feature type="active site" description="Charge relay system" evidence="5">
    <location>
        <position position="740"/>
    </location>
</feature>
<feature type="glycosylation site" description="N-linked (GlcNAc...) asparagine" evidence="6">
    <location>
        <position position="85"/>
    </location>
</feature>
<feature type="glycosylation site" description="N-linked (GlcNAc...) asparagine" evidence="6">
    <location>
        <position position="92"/>
    </location>
</feature>
<feature type="glycosylation site" description="N-linked (GlcNAc...) asparagine" evidence="4">
    <location>
        <position position="150"/>
    </location>
</feature>
<feature type="glycosylation site" description="N-linked (GlcNAc...) asparagine" evidence="4">
    <location>
        <position position="179"/>
    </location>
</feature>
<feature type="glycosylation site" description="N-linked (GlcNAc...) asparagine" evidence="4">
    <location>
        <position position="219"/>
    </location>
</feature>
<feature type="glycosylation site" description="N-linked (GlcNAc...) asparagine" evidence="6">
    <location>
        <position position="229"/>
    </location>
</feature>
<feature type="glycosylation site" description="N-linked (GlcNAc...) asparagine" evidence="6">
    <location>
        <position position="279"/>
    </location>
</feature>
<feature type="glycosylation site" description="N-linked (GlcNAc...) asparagine" evidence="6">
    <location>
        <position position="321"/>
    </location>
</feature>
<feature type="glycosylation site" description="N-linked (GlcNAc...) asparagine" evidence="6">
    <location>
        <position position="685"/>
    </location>
</feature>
<feature type="disulfide bond">
    <location>
        <begin position="385"/>
        <end position="394"/>
    </location>
</feature>
<feature type="disulfide bond">
    <location>
        <begin position="444"/>
        <end position="447"/>
    </location>
</feature>
<feature type="disulfide bond">
    <location>
        <begin position="454"/>
        <end position="472"/>
    </location>
</feature>
<feature type="disulfide bond">
    <location>
        <begin position="649"/>
        <end position="762"/>
    </location>
</feature>
<feature type="sequence conflict" description="In Ref. 2." evidence="8" ref="2">
    <location>
        <position position="32"/>
    </location>
</feature>
<feature type="helix" evidence="9">
    <location>
        <begin position="45"/>
        <end position="50"/>
    </location>
</feature>
<feature type="strand" evidence="9">
    <location>
        <begin position="60"/>
        <end position="62"/>
    </location>
</feature>
<feature type="strand" evidence="9">
    <location>
        <begin position="64"/>
        <end position="72"/>
    </location>
</feature>
<feature type="strand" evidence="9">
    <location>
        <begin position="75"/>
        <end position="80"/>
    </location>
</feature>
<feature type="turn" evidence="9">
    <location>
        <begin position="81"/>
        <end position="83"/>
    </location>
</feature>
<feature type="strand" evidence="9">
    <location>
        <begin position="87"/>
        <end position="90"/>
    </location>
</feature>
<feature type="helix" evidence="10">
    <location>
        <begin position="92"/>
        <end position="96"/>
    </location>
</feature>
<feature type="strand" evidence="10">
    <location>
        <begin position="98"/>
        <end position="100"/>
    </location>
</feature>
<feature type="strand" evidence="9">
    <location>
        <begin position="104"/>
        <end position="107"/>
    </location>
</feature>
<feature type="strand" evidence="9">
    <location>
        <begin position="111"/>
        <end position="122"/>
    </location>
</feature>
<feature type="strand" evidence="9">
    <location>
        <begin position="124"/>
        <end position="126"/>
    </location>
</feature>
<feature type="strand" evidence="9">
    <location>
        <begin position="128"/>
        <end position="136"/>
    </location>
</feature>
<feature type="turn" evidence="9">
    <location>
        <begin position="137"/>
        <end position="140"/>
    </location>
</feature>
<feature type="strand" evidence="9">
    <location>
        <begin position="152"/>
        <end position="157"/>
    </location>
</feature>
<feature type="strand" evidence="11">
    <location>
        <begin position="159"/>
        <end position="162"/>
    </location>
</feature>
<feature type="strand" evidence="9">
    <location>
        <begin position="164"/>
        <end position="168"/>
    </location>
</feature>
<feature type="strand" evidence="9">
    <location>
        <begin position="171"/>
        <end position="177"/>
    </location>
</feature>
<feature type="turn" evidence="9">
    <location>
        <begin position="191"/>
        <end position="193"/>
    </location>
</feature>
<feature type="strand" evidence="9">
    <location>
        <begin position="194"/>
        <end position="198"/>
    </location>
</feature>
<feature type="helix" evidence="9">
    <location>
        <begin position="201"/>
        <end position="206"/>
    </location>
</feature>
<feature type="strand" evidence="9">
    <location>
        <begin position="209"/>
        <end position="212"/>
    </location>
</feature>
<feature type="strand" evidence="9">
    <location>
        <begin position="214"/>
        <end position="216"/>
    </location>
</feature>
<feature type="strand" evidence="9">
    <location>
        <begin position="220"/>
        <end position="229"/>
    </location>
</feature>
<feature type="strand" evidence="9">
    <location>
        <begin position="235"/>
        <end position="240"/>
    </location>
</feature>
<feature type="strand" evidence="9">
    <location>
        <begin position="250"/>
        <end position="255"/>
    </location>
</feature>
<feature type="strand" evidence="9">
    <location>
        <begin position="265"/>
        <end position="272"/>
    </location>
</feature>
<feature type="helix" evidence="9">
    <location>
        <begin position="273"/>
        <end position="275"/>
    </location>
</feature>
<feature type="strand" evidence="9">
    <location>
        <begin position="283"/>
        <end position="287"/>
    </location>
</feature>
<feature type="helix" evidence="9">
    <location>
        <begin position="291"/>
        <end position="294"/>
    </location>
</feature>
<feature type="strand" evidence="9">
    <location>
        <begin position="298"/>
        <end position="307"/>
    </location>
</feature>
<feature type="strand" evidence="9">
    <location>
        <begin position="310"/>
        <end position="317"/>
    </location>
</feature>
<feature type="strand" evidence="9">
    <location>
        <begin position="320"/>
        <end position="330"/>
    </location>
</feature>
<feature type="turn" evidence="9">
    <location>
        <begin position="332"/>
        <end position="334"/>
    </location>
</feature>
<feature type="helix" evidence="9">
    <location>
        <begin position="341"/>
        <end position="343"/>
    </location>
</feature>
<feature type="strand" evidence="9">
    <location>
        <begin position="344"/>
        <end position="348"/>
    </location>
</feature>
<feature type="strand" evidence="9">
    <location>
        <begin position="350"/>
        <end position="352"/>
    </location>
</feature>
<feature type="strand" evidence="9">
    <location>
        <begin position="354"/>
        <end position="358"/>
    </location>
</feature>
<feature type="strand" evidence="9">
    <location>
        <begin position="368"/>
        <end position="376"/>
    </location>
</feature>
<feature type="strand" evidence="10">
    <location>
        <begin position="378"/>
        <end position="380"/>
    </location>
</feature>
<feature type="strand" evidence="9">
    <location>
        <begin position="382"/>
        <end position="388"/>
    </location>
</feature>
<feature type="strand" evidence="9">
    <location>
        <begin position="394"/>
        <end position="397"/>
    </location>
</feature>
<feature type="strand" evidence="9">
    <location>
        <begin position="400"/>
        <end position="402"/>
    </location>
</feature>
<feature type="strand" evidence="9">
    <location>
        <begin position="404"/>
        <end position="410"/>
    </location>
</feature>
<feature type="strand" evidence="9">
    <location>
        <begin position="412"/>
        <end position="420"/>
    </location>
</feature>
<feature type="helix" evidence="9">
    <location>
        <begin position="422"/>
        <end position="424"/>
    </location>
</feature>
<feature type="strand" evidence="9">
    <location>
        <begin position="429"/>
        <end position="435"/>
    </location>
</feature>
<feature type="strand" evidence="9">
    <location>
        <begin position="438"/>
        <end position="446"/>
    </location>
</feature>
<feature type="turn" evidence="9">
    <location>
        <begin position="447"/>
        <end position="449"/>
    </location>
</feature>
<feature type="turn" evidence="9">
    <location>
        <begin position="451"/>
        <end position="453"/>
    </location>
</feature>
<feature type="strand" evidence="9">
    <location>
        <begin position="456"/>
        <end position="461"/>
    </location>
</feature>
<feature type="strand" evidence="9">
    <location>
        <begin position="465"/>
        <end position="472"/>
    </location>
</feature>
<feature type="strand" evidence="9">
    <location>
        <begin position="474"/>
        <end position="477"/>
    </location>
</feature>
<feature type="strand" evidence="9">
    <location>
        <begin position="479"/>
        <end position="484"/>
    </location>
</feature>
<feature type="turn" evidence="9">
    <location>
        <begin position="485"/>
        <end position="488"/>
    </location>
</feature>
<feature type="strand" evidence="9">
    <location>
        <begin position="489"/>
        <end position="495"/>
    </location>
</feature>
<feature type="helix" evidence="9">
    <location>
        <begin position="498"/>
        <end position="504"/>
    </location>
</feature>
<feature type="strand" evidence="12">
    <location>
        <begin position="506"/>
        <end position="508"/>
    </location>
</feature>
<feature type="strand" evidence="9">
    <location>
        <begin position="511"/>
        <end position="519"/>
    </location>
</feature>
<feature type="strand" evidence="9">
    <location>
        <begin position="522"/>
        <end position="530"/>
    </location>
</feature>
<feature type="strand" evidence="12">
    <location>
        <begin position="536"/>
        <end position="538"/>
    </location>
</feature>
<feature type="strand" evidence="9">
    <location>
        <begin position="540"/>
        <end position="546"/>
    </location>
</feature>
<feature type="helix" evidence="9">
    <location>
        <begin position="563"/>
        <end position="569"/>
    </location>
</feature>
<feature type="strand" evidence="9">
    <location>
        <begin position="574"/>
        <end position="578"/>
    </location>
</feature>
<feature type="strand" evidence="9">
    <location>
        <begin position="584"/>
        <end position="586"/>
    </location>
</feature>
<feature type="helix" evidence="9">
    <location>
        <begin position="588"/>
        <end position="591"/>
    </location>
</feature>
<feature type="helix" evidence="9">
    <location>
        <begin position="592"/>
        <end position="594"/>
    </location>
</feature>
<feature type="turn" evidence="12">
    <location>
        <begin position="598"/>
        <end position="600"/>
    </location>
</feature>
<feature type="helix" evidence="9">
    <location>
        <begin position="601"/>
        <end position="614"/>
    </location>
</feature>
<feature type="strand" evidence="9">
    <location>
        <begin position="619"/>
        <end position="629"/>
    </location>
</feature>
<feature type="helix" evidence="9">
    <location>
        <begin position="631"/>
        <end position="640"/>
    </location>
</feature>
<feature type="turn" evidence="9">
    <location>
        <begin position="641"/>
        <end position="643"/>
    </location>
</feature>
<feature type="strand" evidence="9">
    <location>
        <begin position="648"/>
        <end position="654"/>
    </location>
</feature>
<feature type="helix" evidence="9">
    <location>
        <begin position="659"/>
        <end position="661"/>
    </location>
</feature>
<feature type="helix" evidence="9">
    <location>
        <begin position="664"/>
        <end position="671"/>
    </location>
</feature>
<feature type="turn" evidence="9">
    <location>
        <begin position="676"/>
        <end position="679"/>
    </location>
</feature>
<feature type="helix" evidence="9">
    <location>
        <begin position="680"/>
        <end position="684"/>
    </location>
</feature>
<feature type="helix" evidence="9">
    <location>
        <begin position="689"/>
        <end position="697"/>
    </location>
</feature>
<feature type="strand" evidence="9">
    <location>
        <begin position="698"/>
        <end position="705"/>
    </location>
</feature>
<feature type="strand" evidence="9">
    <location>
        <begin position="709"/>
        <end position="711"/>
    </location>
</feature>
<feature type="helix" evidence="9">
    <location>
        <begin position="713"/>
        <end position="725"/>
    </location>
</feature>
<feature type="strand" evidence="9">
    <location>
        <begin position="731"/>
        <end position="735"/>
    </location>
</feature>
<feature type="helix" evidence="9">
    <location>
        <begin position="745"/>
        <end position="762"/>
    </location>
</feature>
<name>DPP4_PIG</name>
<comment type="function">
    <text evidence="2 7">Cell surface glycoprotein receptor involved in the costimulatory signal essential for T-cell receptor (TCR)-mediated T-cell activation. Acts as a positive regulator of T-cell coactivation, by binding at least ADA, CAV1, IGF2R, and PTPRC (PubMed:14719797). Its binding to CAV1 and CARD11 induces T-cell proliferation and NF-kappa-B activation in a T-cell receptor/CD3-dependent manner. Its interaction with ADA also regulates lymphocyte-epithelial cell adhesion. In association with FAP is involved in the pericellular proteolysis of the extracellular matrix (ECM), the migration and invasion of endothelial cells into the ECM. May be involved in the promotion of lymphatic endothelial cells adhesion, migration and tube formation. When overexpressed, enhanced cell proliferation, a process inhibited by GPC3. Also acts as a serine exopeptidase with a dipeptidyl peptidase activity that regulates various physiological processes by cleaving peptides in the circulation, including many chemokines, mitogenic growth factors, neuropeptides and peptide hormones such as brain natriuretic peptide 32. Removes N-terminal dipeptides sequentially from polypeptides having unsubstituted N-termini provided that the penultimate residue is proline (By similarity).</text>
</comment>
<comment type="catalytic activity">
    <reaction evidence="2 5">
        <text>Release of an N-terminal dipeptide, Xaa-Yaa-|-Zaa-, from a polypeptide, preferentially when Yaa is Pro, provided Zaa is neither Pro nor hydroxyproline.</text>
        <dbReference type="EC" id="3.4.14.5"/>
    </reaction>
</comment>
<comment type="activity regulation">
    <text evidence="1">Inhibited by GPC3 and diprotin A.</text>
</comment>
<comment type="subunit">
    <text evidence="2 6">Monomer. Homodimer (PubMed:12690074). Heterodimer with Seprase (FAP) (By similarity). Requires homodimerization for optimal dipeptidyl peptidase activity and T-cell costimulation (By similarity). Found in a membrane raft complex, at least composed of BCL10, CARD11, DPP4 and IKBKB (By similarity). Associates with collagen (By similarity). Interacts with PTPRC; the interaction is enhanced in an interleukin-12-dependent manner in activated lymphocytes (By similarity). Interacts (via extracellular domain) with ADA; does not inhibit its dipeptidyl peptidase activity (By similarity). Interacts with CAV1 (via the N-terminus); the interaction is direct (By similarity). Interacts (via cytoplasmic tail) with CARD11 (via PDZ domain); its homodimerization is necessary for interaction with CARD11 (By similarity). Interacts with IGF2R; the interaction is direct (By similarity). Interacts with GPC3 (By similarity).</text>
</comment>
<comment type="subcellular location">
    <molecule>Dipeptidyl peptidase 4 soluble form</molecule>
    <subcellularLocation>
        <location>Secreted</location>
    </subcellularLocation>
    <text evidence="1">Detected in the serum and the seminal fluid.</text>
</comment>
<comment type="subcellular location">
    <subcellularLocation>
        <location>Cell membrane</location>
        <topology>Single-pass type II membrane protein</topology>
    </subcellularLocation>
    <subcellularLocation>
        <location evidence="1">Apical cell membrane</location>
        <topology evidence="1">Single-pass type II membrane protein</topology>
    </subcellularLocation>
    <subcellularLocation>
        <location evidence="1">Cell projection</location>
        <location evidence="1">Invadopodium membrane</location>
        <topology evidence="1">Single-pass type II membrane protein</topology>
    </subcellularLocation>
    <subcellularLocation>
        <location evidence="1">Cell projection</location>
        <location evidence="1">Lamellipodium membrane</location>
        <topology evidence="1">Single-pass type II membrane protein</topology>
    </subcellularLocation>
    <subcellularLocation>
        <location evidence="1">Cell junction</location>
    </subcellularLocation>
    <subcellularLocation>
        <location evidence="1">Membrane raft</location>
    </subcellularLocation>
    <text evidence="1">Translocated to the apical membrane through the concerted action of N- and O-Glycans and its association with lipid microdomains containing cholesterol and sphingolipids. Redistributed to membrane rafts in T-cell in an interleukin-12-dependent activation. Its interaction with CAV1 is necessary for its translocation to membrane rafts. Colocalized with PTPRC in membrane rafts. Colocalized with FAP in invadopodia and lamellipodia of migratory activated endothelial cells in collagenous matrix. Colocalized with FAP on endothelial cells of capillary-like microvessels but not large vessels within invasive breast ductal carcinoma. Colocalized with ADA at the cell junction in lymphocyte-epithelial cell adhesion. Colocalized with IGF2R in internalized cytoplasmic vesicles adjacent to the cell surface (By similarity).</text>
</comment>
<comment type="PTM">
    <text>The soluble form (Dipeptidyl peptidase 4 soluble form also named SDPP) derives from the membrane form (Dipeptidyl peptidase 4 membrane form also named MDPP) by proteolytic processing.</text>
</comment>
<comment type="PTM">
    <text evidence="1">N- and O-Glycosylated.</text>
</comment>
<comment type="PTM">
    <text evidence="1">Phosphorylated. Mannose 6-phosphate residues in the carbohydrate moiety are necessary for interaction with IGF2R in activated T-cells. Mannose 6-phosphorylation is induced during T-cell activation (By similarity).</text>
</comment>
<comment type="similarity">
    <text evidence="8">Belongs to the peptidase S9B family. DPPIV subfamily.</text>
</comment>